<comment type="function">
    <text evidence="1">Catalyzes the conversion of acetate into acetyl-CoA (AcCoA), an essential intermediate at the junction of anabolic and catabolic pathways. AcsA undergoes a two-step reaction. In the first half reaction, AcsA combines acetate with ATP to form acetyl-adenylate (AcAMP) intermediate. In the second half reaction, it can then transfer the acetyl group from AcAMP to the sulfhydryl group of CoA, forming the product AcCoA.</text>
</comment>
<comment type="catalytic activity">
    <reaction evidence="1">
        <text>acetate + ATP + CoA = acetyl-CoA + AMP + diphosphate</text>
        <dbReference type="Rhea" id="RHEA:23176"/>
        <dbReference type="ChEBI" id="CHEBI:30089"/>
        <dbReference type="ChEBI" id="CHEBI:30616"/>
        <dbReference type="ChEBI" id="CHEBI:33019"/>
        <dbReference type="ChEBI" id="CHEBI:57287"/>
        <dbReference type="ChEBI" id="CHEBI:57288"/>
        <dbReference type="ChEBI" id="CHEBI:456215"/>
        <dbReference type="EC" id="6.2.1.1"/>
    </reaction>
</comment>
<comment type="cofactor">
    <cofactor evidence="1">
        <name>Mg(2+)</name>
        <dbReference type="ChEBI" id="CHEBI:18420"/>
    </cofactor>
</comment>
<comment type="PTM">
    <text evidence="1">Acetylated. Deacetylation by the SIR2-homolog deacetylase activates the enzyme.</text>
</comment>
<comment type="similarity">
    <text evidence="1">Belongs to the ATP-dependent AMP-binding enzyme family.</text>
</comment>
<proteinExistence type="inferred from homology"/>
<accession>Q1AXQ5</accession>
<feature type="chain" id="PRO_1000065312" description="Acetyl-coenzyme A synthetase">
    <location>
        <begin position="1"/>
        <end position="644"/>
    </location>
</feature>
<feature type="binding site" evidence="1">
    <location>
        <begin position="189"/>
        <end position="192"/>
    </location>
    <ligand>
        <name>CoA</name>
        <dbReference type="ChEBI" id="CHEBI:57287"/>
    </ligand>
</feature>
<feature type="binding site" evidence="1">
    <location>
        <position position="307"/>
    </location>
    <ligand>
        <name>CoA</name>
        <dbReference type="ChEBI" id="CHEBI:57287"/>
    </ligand>
</feature>
<feature type="binding site" evidence="1">
    <location>
        <begin position="383"/>
        <end position="385"/>
    </location>
    <ligand>
        <name>ATP</name>
        <dbReference type="ChEBI" id="CHEBI:30616"/>
    </ligand>
</feature>
<feature type="binding site" evidence="1">
    <location>
        <begin position="407"/>
        <end position="412"/>
    </location>
    <ligand>
        <name>ATP</name>
        <dbReference type="ChEBI" id="CHEBI:30616"/>
    </ligand>
</feature>
<feature type="binding site" evidence="1">
    <location>
        <position position="496"/>
    </location>
    <ligand>
        <name>ATP</name>
        <dbReference type="ChEBI" id="CHEBI:30616"/>
    </ligand>
</feature>
<feature type="binding site" evidence="1">
    <location>
        <position position="511"/>
    </location>
    <ligand>
        <name>ATP</name>
        <dbReference type="ChEBI" id="CHEBI:30616"/>
    </ligand>
</feature>
<feature type="binding site" evidence="1">
    <location>
        <position position="519"/>
    </location>
    <ligand>
        <name>CoA</name>
        <dbReference type="ChEBI" id="CHEBI:57287"/>
    </ligand>
</feature>
<feature type="binding site" evidence="1">
    <location>
        <position position="522"/>
    </location>
    <ligand>
        <name>ATP</name>
        <dbReference type="ChEBI" id="CHEBI:30616"/>
    </ligand>
</feature>
<feature type="binding site" evidence="1">
    <location>
        <position position="533"/>
    </location>
    <ligand>
        <name>Mg(2+)</name>
        <dbReference type="ChEBI" id="CHEBI:18420"/>
    </ligand>
</feature>
<feature type="binding site" evidence="1">
    <location>
        <position position="535"/>
    </location>
    <ligand>
        <name>Mg(2+)</name>
        <dbReference type="ChEBI" id="CHEBI:18420"/>
    </ligand>
</feature>
<feature type="binding site" evidence="1">
    <location>
        <position position="538"/>
    </location>
    <ligand>
        <name>Mg(2+)</name>
        <dbReference type="ChEBI" id="CHEBI:18420"/>
    </ligand>
</feature>
<feature type="binding site" evidence="1">
    <location>
        <position position="580"/>
    </location>
    <ligand>
        <name>CoA</name>
        <dbReference type="ChEBI" id="CHEBI:57287"/>
    </ligand>
</feature>
<feature type="modified residue" description="N6-acetyllysine" evidence="1">
    <location>
        <position position="605"/>
    </location>
</feature>
<gene>
    <name evidence="1" type="primary">acsA</name>
    <name type="ordered locus">Rxyl_0856</name>
</gene>
<reference key="1">
    <citation type="submission" date="2006-06" db="EMBL/GenBank/DDBJ databases">
        <title>Complete sequence of Rubrobacter xylanophilus DSM 9941.</title>
        <authorList>
            <consortium name="US DOE Joint Genome Institute"/>
            <person name="Copeland A."/>
            <person name="Lucas S."/>
            <person name="Lapidus A."/>
            <person name="Barry K."/>
            <person name="Detter J.C."/>
            <person name="Glavina del Rio T."/>
            <person name="Hammon N."/>
            <person name="Israni S."/>
            <person name="Dalin E."/>
            <person name="Tice H."/>
            <person name="Pitluck S."/>
            <person name="Munk A.C."/>
            <person name="Brettin T."/>
            <person name="Bruce D."/>
            <person name="Han C."/>
            <person name="Tapia R."/>
            <person name="Gilna P."/>
            <person name="Schmutz J."/>
            <person name="Larimer F."/>
            <person name="Land M."/>
            <person name="Hauser L."/>
            <person name="Kyrpides N."/>
            <person name="Lykidis A."/>
            <person name="da Costa M.S."/>
            <person name="Rainey F.A."/>
            <person name="Empadinhas N."/>
            <person name="Jolivet E."/>
            <person name="Battista J.R."/>
            <person name="Richardson P."/>
        </authorList>
    </citation>
    <scope>NUCLEOTIDE SEQUENCE [LARGE SCALE GENOMIC DNA]</scope>
    <source>
        <strain>DSM 9941 / JCM 11954 / NBRC 16129 / PRD-1</strain>
    </source>
</reference>
<organism>
    <name type="scientific">Rubrobacter xylanophilus (strain DSM 9941 / JCM 11954 / NBRC 16129 / PRD-1)</name>
    <dbReference type="NCBI Taxonomy" id="266117"/>
    <lineage>
        <taxon>Bacteria</taxon>
        <taxon>Bacillati</taxon>
        <taxon>Actinomycetota</taxon>
        <taxon>Rubrobacteria</taxon>
        <taxon>Rubrobacterales</taxon>
        <taxon>Rubrobacteraceae</taxon>
        <taxon>Rubrobacter</taxon>
    </lineage>
</organism>
<name>ACSA_RUBXD</name>
<dbReference type="EC" id="6.2.1.1" evidence="1"/>
<dbReference type="EMBL" id="CP000386">
    <property type="protein sequence ID" value="ABG03823.1"/>
    <property type="molecule type" value="Genomic_DNA"/>
</dbReference>
<dbReference type="RefSeq" id="WP_011563841.1">
    <property type="nucleotide sequence ID" value="NC_008148.1"/>
</dbReference>
<dbReference type="SMR" id="Q1AXQ5"/>
<dbReference type="STRING" id="266117.Rxyl_0856"/>
<dbReference type="KEGG" id="rxy:Rxyl_0856"/>
<dbReference type="eggNOG" id="COG0365">
    <property type="taxonomic scope" value="Bacteria"/>
</dbReference>
<dbReference type="HOGENOM" id="CLU_000022_3_6_11"/>
<dbReference type="OrthoDB" id="9803968at2"/>
<dbReference type="PhylomeDB" id="Q1AXQ5"/>
<dbReference type="Proteomes" id="UP000006637">
    <property type="component" value="Chromosome"/>
</dbReference>
<dbReference type="GO" id="GO:0005829">
    <property type="term" value="C:cytosol"/>
    <property type="evidence" value="ECO:0007669"/>
    <property type="project" value="TreeGrafter"/>
</dbReference>
<dbReference type="GO" id="GO:0003987">
    <property type="term" value="F:acetate-CoA ligase activity"/>
    <property type="evidence" value="ECO:0007669"/>
    <property type="project" value="UniProtKB-UniRule"/>
</dbReference>
<dbReference type="GO" id="GO:0016208">
    <property type="term" value="F:AMP binding"/>
    <property type="evidence" value="ECO:0007669"/>
    <property type="project" value="InterPro"/>
</dbReference>
<dbReference type="GO" id="GO:0005524">
    <property type="term" value="F:ATP binding"/>
    <property type="evidence" value="ECO:0007669"/>
    <property type="project" value="UniProtKB-KW"/>
</dbReference>
<dbReference type="GO" id="GO:0046872">
    <property type="term" value="F:metal ion binding"/>
    <property type="evidence" value="ECO:0007669"/>
    <property type="project" value="UniProtKB-KW"/>
</dbReference>
<dbReference type="GO" id="GO:0019427">
    <property type="term" value="P:acetyl-CoA biosynthetic process from acetate"/>
    <property type="evidence" value="ECO:0007669"/>
    <property type="project" value="InterPro"/>
</dbReference>
<dbReference type="CDD" id="cd05966">
    <property type="entry name" value="ACS"/>
    <property type="match status" value="1"/>
</dbReference>
<dbReference type="FunFam" id="3.40.50.12780:FF:000001">
    <property type="entry name" value="Acetyl-coenzyme A synthetase"/>
    <property type="match status" value="1"/>
</dbReference>
<dbReference type="Gene3D" id="3.30.300.30">
    <property type="match status" value="1"/>
</dbReference>
<dbReference type="Gene3D" id="3.40.50.12780">
    <property type="entry name" value="N-terminal domain of ligase-like"/>
    <property type="match status" value="1"/>
</dbReference>
<dbReference type="HAMAP" id="MF_01123">
    <property type="entry name" value="Ac_CoA_synth"/>
    <property type="match status" value="1"/>
</dbReference>
<dbReference type="InterPro" id="IPR011904">
    <property type="entry name" value="Ac_CoA_lig"/>
</dbReference>
<dbReference type="InterPro" id="IPR032387">
    <property type="entry name" value="ACAS_N"/>
</dbReference>
<dbReference type="InterPro" id="IPR025110">
    <property type="entry name" value="AMP-bd_C"/>
</dbReference>
<dbReference type="InterPro" id="IPR045851">
    <property type="entry name" value="AMP-bd_C_sf"/>
</dbReference>
<dbReference type="InterPro" id="IPR020845">
    <property type="entry name" value="AMP-binding_CS"/>
</dbReference>
<dbReference type="InterPro" id="IPR000873">
    <property type="entry name" value="AMP-dep_synth/lig_dom"/>
</dbReference>
<dbReference type="InterPro" id="IPR042099">
    <property type="entry name" value="ANL_N_sf"/>
</dbReference>
<dbReference type="NCBIfam" id="TIGR02188">
    <property type="entry name" value="Ac_CoA_lig_AcsA"/>
    <property type="match status" value="1"/>
</dbReference>
<dbReference type="NCBIfam" id="NF001208">
    <property type="entry name" value="PRK00174.1"/>
    <property type="match status" value="1"/>
</dbReference>
<dbReference type="PANTHER" id="PTHR24095">
    <property type="entry name" value="ACETYL-COENZYME A SYNTHETASE"/>
    <property type="match status" value="1"/>
</dbReference>
<dbReference type="PANTHER" id="PTHR24095:SF14">
    <property type="entry name" value="ACETYL-COENZYME A SYNTHETASE 1"/>
    <property type="match status" value="1"/>
</dbReference>
<dbReference type="Pfam" id="PF16177">
    <property type="entry name" value="ACAS_N"/>
    <property type="match status" value="1"/>
</dbReference>
<dbReference type="Pfam" id="PF00501">
    <property type="entry name" value="AMP-binding"/>
    <property type="match status" value="1"/>
</dbReference>
<dbReference type="Pfam" id="PF13193">
    <property type="entry name" value="AMP-binding_C"/>
    <property type="match status" value="1"/>
</dbReference>
<dbReference type="SUPFAM" id="SSF56801">
    <property type="entry name" value="Acetyl-CoA synthetase-like"/>
    <property type="match status" value="1"/>
</dbReference>
<dbReference type="PROSITE" id="PS00455">
    <property type="entry name" value="AMP_BINDING"/>
    <property type="match status" value="1"/>
</dbReference>
<evidence type="ECO:0000255" key="1">
    <source>
        <dbReference type="HAMAP-Rule" id="MF_01123"/>
    </source>
</evidence>
<sequence length="644" mass="71877">MTEEKASVRTYDPPEEFASRANVRDPGVYEEAARDYEGFWAERARKLHWFREWDEVLRWDPPEAQWFVGGKINASYNCLDYQVQQGRGDKRAIIWEGDEPGENRTLTYSELKAEVEKFANVLKGLGVRKGDAVSIYLPMIPELPIAMLACARIGAPHSVVFGAFSAQSLRDRINDCEAKVLVTADSGPRGGKRTPLKANADEALEDTPSIEKVVVVRRTGDEVNMVEGRDLWWHELMREAEPECPAEEMDSEDILYILYSSGSTGKPKGIVHTTGGYLTHVNTTTDWVFDLKEDDVYWCTADIGWVTGHSYIVYGPLSNGATALMFEGTPSYPANDRWWDIIERHGVTILYTAPTAIRAFMKQGPGPIEKHDLSSLRLLGSVGEPINPRAWEWYHEHVGGGRCPVVDTWWQTETGGIMISPLPGITRTKPGSATFPLPGIFAGIYDEEGNEIEGPGVGNLVIKRPWPGMLRTLYKDPERFRETYWQKYGDVYFSGDGARRDEDGYFWVTGRVDDVINVSGHRISTAEVESALVAHPAVAEAAVIGRYDEDTGQAIVAYVILEGGREGNDELAQELRQQVRKVIGAHARPQEIIFTPDLPKTRSGKIMRRILRSLSEGRDDLGDTTTLADPGVVESLKEQVAASR</sequence>
<keyword id="KW-0007">Acetylation</keyword>
<keyword id="KW-0067">ATP-binding</keyword>
<keyword id="KW-0436">Ligase</keyword>
<keyword id="KW-0460">Magnesium</keyword>
<keyword id="KW-0479">Metal-binding</keyword>
<keyword id="KW-0547">Nucleotide-binding</keyword>
<keyword id="KW-1185">Reference proteome</keyword>
<protein>
    <recommendedName>
        <fullName evidence="1">Acetyl-coenzyme A synthetase</fullName>
        <shortName evidence="1">AcCoA synthetase</shortName>
        <shortName evidence="1">Acs</shortName>
        <ecNumber evidence="1">6.2.1.1</ecNumber>
    </recommendedName>
    <alternativeName>
        <fullName evidence="1">Acetate--CoA ligase</fullName>
    </alternativeName>
    <alternativeName>
        <fullName evidence="1">Acyl-activating enzyme</fullName>
    </alternativeName>
</protein>